<keyword id="KW-0227">DNA damage</keyword>
<keyword id="KW-0234">DNA repair</keyword>
<keyword id="KW-0235">DNA replication</keyword>
<keyword id="KW-0255">Endonuclease</keyword>
<keyword id="KW-0269">Exonuclease</keyword>
<keyword id="KW-0378">Hydrolase</keyword>
<keyword id="KW-0460">Magnesium</keyword>
<keyword id="KW-0479">Metal-binding</keyword>
<keyword id="KW-0540">Nuclease</keyword>
<keyword id="KW-1185">Reference proteome</keyword>
<comment type="function">
    <text evidence="1">Structure-specific nuclease with 5'-flap endonuclease and 5'-3' exonuclease activities involved in DNA replication and repair. During DNA replication, cleaves the 5'-overhanging flap structure that is generated by displacement synthesis when DNA polymerase encounters the 5'-end of a downstream Okazaki fragment. Binds the unpaired 3'-DNA end and kinks the DNA to facilitate 5' cleavage specificity. Cleaves one nucleotide into the double-stranded DNA from the junction in flap DNA, leaving a nick for ligation. Also involved in the base excision repair (BER) pathway. Acts as a genome stabilization factor that prevents flaps from equilibrating into structures that lead to duplications and deletions. Also possesses 5'-3' exonuclease activity on nicked or gapped double-stranded DNA (By similarity).</text>
</comment>
<comment type="cofactor">
    <cofactor evidence="2">
        <name>Mg(2+)</name>
        <dbReference type="ChEBI" id="CHEBI:18420"/>
    </cofactor>
    <text evidence="2">Binds 2 magnesium ions per subunit. They probably participate in the reaction catalyzed by the enzyme. May bind an additional third magnesium ion after substrate binding.</text>
</comment>
<comment type="subunit">
    <text evidence="2">Interacts with PCNA. PCNA stimulates the nuclease activity without altering cleavage specificity.</text>
</comment>
<comment type="similarity">
    <text evidence="2">Belongs to the XPG/RAD2 endonuclease family. FEN1 subfamily.</text>
</comment>
<name>FEN_HALMA</name>
<proteinExistence type="inferred from homology"/>
<sequence length="326" mass="36132">MGNADLRSLAALSDVSFDDLGGSVVAVDAHNWLYRYLTTTVKFTSESKYTTSNGEEVANLIGVVQGLPKFFEHDMTPVFVFDGAVTDLKDDEVEKRREQRQKYESELEAAREAGDSTRVAKLDSRTQRLTDTIVDTTRDLLELLDVPIVDAPAEGEGQASVMARRGDVDYVGTEDYDALLFGAPMTLRQITSKGDPELMDFAATLEHHDLTWEQLVDAAILMGTDFNEGISGIGPKTAVKDLHEHGDLYTVLAARGEHIDHADRIRDLFLDPAATDDYEIPDSIEPDIDAARTFVTDQWEVDADEVARGFERIDDSVVQTGLDRWA</sequence>
<gene>
    <name evidence="2" type="primary">fen</name>
    <name type="ordered locus">rrnAC0032</name>
</gene>
<feature type="chain" id="PRO_1000200235" description="Flap endonuclease 1">
    <location>
        <begin position="1"/>
        <end position="326"/>
    </location>
</feature>
<feature type="region of interest" description="N-domain">
    <location>
        <begin position="1"/>
        <end position="100"/>
    </location>
</feature>
<feature type="region of interest" description="I-domain">
    <location>
        <begin position="118"/>
        <end position="246"/>
    </location>
</feature>
<feature type="region of interest" description="Interaction with PCNA" evidence="2">
    <location>
        <begin position="318"/>
        <end position="326"/>
    </location>
</feature>
<feature type="binding site" evidence="2">
    <location>
        <position position="28"/>
    </location>
    <ligand>
        <name>Mg(2+)</name>
        <dbReference type="ChEBI" id="CHEBI:18420"/>
        <label>1</label>
    </ligand>
</feature>
<feature type="binding site" evidence="2">
    <location>
        <position position="82"/>
    </location>
    <ligand>
        <name>Mg(2+)</name>
        <dbReference type="ChEBI" id="CHEBI:18420"/>
        <label>1</label>
    </ligand>
</feature>
<feature type="binding site" evidence="2">
    <location>
        <position position="154"/>
    </location>
    <ligand>
        <name>Mg(2+)</name>
        <dbReference type="ChEBI" id="CHEBI:18420"/>
        <label>1</label>
    </ligand>
</feature>
<feature type="binding site" evidence="2">
    <location>
        <position position="156"/>
    </location>
    <ligand>
        <name>Mg(2+)</name>
        <dbReference type="ChEBI" id="CHEBI:18420"/>
        <label>1</label>
    </ligand>
</feature>
<feature type="binding site" evidence="2">
    <location>
        <position position="175"/>
    </location>
    <ligand>
        <name>Mg(2+)</name>
        <dbReference type="ChEBI" id="CHEBI:18420"/>
        <label>2</label>
    </ligand>
</feature>
<feature type="binding site" evidence="2">
    <location>
        <position position="177"/>
    </location>
    <ligand>
        <name>Mg(2+)</name>
        <dbReference type="ChEBI" id="CHEBI:18420"/>
        <label>2</label>
    </ligand>
</feature>
<feature type="binding site" evidence="2">
    <location>
        <position position="225"/>
    </location>
    <ligand>
        <name>Mg(2+)</name>
        <dbReference type="ChEBI" id="CHEBI:18420"/>
        <label>2</label>
    </ligand>
</feature>
<reference key="1">
    <citation type="journal article" date="2004" name="Genome Res.">
        <title>Genome sequence of Haloarcula marismortui: a halophilic archaeon from the Dead Sea.</title>
        <authorList>
            <person name="Baliga N.S."/>
            <person name="Bonneau R."/>
            <person name="Facciotti M.T."/>
            <person name="Pan M."/>
            <person name="Glusman G."/>
            <person name="Deutsch E.W."/>
            <person name="Shannon P."/>
            <person name="Chiu Y."/>
            <person name="Weng R.S."/>
            <person name="Gan R.R."/>
            <person name="Hung P."/>
            <person name="Date S.V."/>
            <person name="Marcotte E."/>
            <person name="Hood L."/>
            <person name="Ng W.V."/>
        </authorList>
    </citation>
    <scope>NUCLEOTIDE SEQUENCE [LARGE SCALE GENOMIC DNA]</scope>
    <source>
        <strain>ATCC 43049 / DSM 3752 / JCM 8966 / VKM B-1809</strain>
    </source>
</reference>
<accession>Q5V5T7</accession>
<dbReference type="EC" id="3.1.-.-" evidence="2"/>
<dbReference type="EMBL" id="AY596297">
    <property type="protein sequence ID" value="AAV45115.1"/>
    <property type="molecule type" value="Genomic_DNA"/>
</dbReference>
<dbReference type="RefSeq" id="WP_011222786.1">
    <property type="nucleotide sequence ID" value="NZ_CP039138.1"/>
</dbReference>
<dbReference type="SMR" id="Q5V5T7"/>
<dbReference type="STRING" id="272569.rrnAC0032"/>
<dbReference type="PaxDb" id="272569-rrnAC0032"/>
<dbReference type="EnsemblBacteria" id="AAV45115">
    <property type="protein sequence ID" value="AAV45115"/>
    <property type="gene ID" value="rrnAC0032"/>
</dbReference>
<dbReference type="GeneID" id="40154350"/>
<dbReference type="KEGG" id="hma:rrnAC0032"/>
<dbReference type="PATRIC" id="fig|272569.17.peg.844"/>
<dbReference type="eggNOG" id="arCOG04050">
    <property type="taxonomic scope" value="Archaea"/>
</dbReference>
<dbReference type="HOGENOM" id="CLU_032444_0_0_2"/>
<dbReference type="Proteomes" id="UP000001169">
    <property type="component" value="Chromosome I"/>
</dbReference>
<dbReference type="GO" id="GO:0008409">
    <property type="term" value="F:5'-3' exonuclease activity"/>
    <property type="evidence" value="ECO:0007669"/>
    <property type="project" value="UniProtKB-UniRule"/>
</dbReference>
<dbReference type="GO" id="GO:0017108">
    <property type="term" value="F:5'-flap endonuclease activity"/>
    <property type="evidence" value="ECO:0007669"/>
    <property type="project" value="UniProtKB-UniRule"/>
</dbReference>
<dbReference type="GO" id="GO:0003677">
    <property type="term" value="F:DNA binding"/>
    <property type="evidence" value="ECO:0007669"/>
    <property type="project" value="UniProtKB-UniRule"/>
</dbReference>
<dbReference type="GO" id="GO:0000287">
    <property type="term" value="F:magnesium ion binding"/>
    <property type="evidence" value="ECO:0007669"/>
    <property type="project" value="UniProtKB-UniRule"/>
</dbReference>
<dbReference type="GO" id="GO:0006281">
    <property type="term" value="P:DNA repair"/>
    <property type="evidence" value="ECO:0007669"/>
    <property type="project" value="UniProtKB-UniRule"/>
</dbReference>
<dbReference type="GO" id="GO:0043137">
    <property type="term" value="P:DNA replication, removal of RNA primer"/>
    <property type="evidence" value="ECO:0007669"/>
    <property type="project" value="UniProtKB-UniRule"/>
</dbReference>
<dbReference type="CDD" id="cd09903">
    <property type="entry name" value="H3TH_FEN1-Arc"/>
    <property type="match status" value="1"/>
</dbReference>
<dbReference type="CDD" id="cd09867">
    <property type="entry name" value="PIN_FEN1"/>
    <property type="match status" value="1"/>
</dbReference>
<dbReference type="Gene3D" id="1.10.150.20">
    <property type="entry name" value="5' to 3' exonuclease, C-terminal subdomain"/>
    <property type="match status" value="1"/>
</dbReference>
<dbReference type="Gene3D" id="3.40.50.1010">
    <property type="entry name" value="5'-nuclease"/>
    <property type="match status" value="1"/>
</dbReference>
<dbReference type="HAMAP" id="MF_00614">
    <property type="entry name" value="Fen"/>
    <property type="match status" value="1"/>
</dbReference>
<dbReference type="InterPro" id="IPR002421">
    <property type="entry name" value="5-3_exonuclease"/>
</dbReference>
<dbReference type="InterPro" id="IPR036279">
    <property type="entry name" value="5-3_exonuclease_C_sf"/>
</dbReference>
<dbReference type="InterPro" id="IPR023426">
    <property type="entry name" value="Flap_endonuc"/>
</dbReference>
<dbReference type="InterPro" id="IPR019973">
    <property type="entry name" value="Flap_endonuc_arc"/>
</dbReference>
<dbReference type="InterPro" id="IPR008918">
    <property type="entry name" value="HhH2"/>
</dbReference>
<dbReference type="InterPro" id="IPR029060">
    <property type="entry name" value="PIN-like_dom_sf"/>
</dbReference>
<dbReference type="InterPro" id="IPR006086">
    <property type="entry name" value="XPG-I_dom"/>
</dbReference>
<dbReference type="InterPro" id="IPR006084">
    <property type="entry name" value="XPG/Rad2"/>
</dbReference>
<dbReference type="InterPro" id="IPR006085">
    <property type="entry name" value="XPG_DNA_repair_N"/>
</dbReference>
<dbReference type="NCBIfam" id="TIGR03674">
    <property type="entry name" value="fen_arch"/>
    <property type="match status" value="1"/>
</dbReference>
<dbReference type="PANTHER" id="PTHR11081:SF9">
    <property type="entry name" value="FLAP ENDONUCLEASE 1"/>
    <property type="match status" value="1"/>
</dbReference>
<dbReference type="PANTHER" id="PTHR11081">
    <property type="entry name" value="FLAP ENDONUCLEASE FAMILY MEMBER"/>
    <property type="match status" value="1"/>
</dbReference>
<dbReference type="Pfam" id="PF00867">
    <property type="entry name" value="XPG_I"/>
    <property type="match status" value="1"/>
</dbReference>
<dbReference type="Pfam" id="PF00752">
    <property type="entry name" value="XPG_N"/>
    <property type="match status" value="1"/>
</dbReference>
<dbReference type="PRINTS" id="PR00853">
    <property type="entry name" value="XPGRADSUPER"/>
</dbReference>
<dbReference type="SMART" id="SM00475">
    <property type="entry name" value="53EXOc"/>
    <property type="match status" value="1"/>
</dbReference>
<dbReference type="SMART" id="SM00279">
    <property type="entry name" value="HhH2"/>
    <property type="match status" value="1"/>
</dbReference>
<dbReference type="SMART" id="SM00484">
    <property type="entry name" value="XPGI"/>
    <property type="match status" value="1"/>
</dbReference>
<dbReference type="SMART" id="SM00485">
    <property type="entry name" value="XPGN"/>
    <property type="match status" value="1"/>
</dbReference>
<dbReference type="SUPFAM" id="SSF47807">
    <property type="entry name" value="5' to 3' exonuclease, C-terminal subdomain"/>
    <property type="match status" value="1"/>
</dbReference>
<dbReference type="SUPFAM" id="SSF88723">
    <property type="entry name" value="PIN domain-like"/>
    <property type="match status" value="1"/>
</dbReference>
<organism>
    <name type="scientific">Haloarcula marismortui (strain ATCC 43049 / DSM 3752 / JCM 8966 / VKM B-1809)</name>
    <name type="common">Halobacterium marismortui</name>
    <dbReference type="NCBI Taxonomy" id="272569"/>
    <lineage>
        <taxon>Archaea</taxon>
        <taxon>Methanobacteriati</taxon>
        <taxon>Methanobacteriota</taxon>
        <taxon>Stenosarchaea group</taxon>
        <taxon>Halobacteria</taxon>
        <taxon>Halobacteriales</taxon>
        <taxon>Haloarculaceae</taxon>
        <taxon>Haloarcula</taxon>
    </lineage>
</organism>
<evidence type="ECO:0000250" key="1"/>
<evidence type="ECO:0000255" key="2">
    <source>
        <dbReference type="HAMAP-Rule" id="MF_00614"/>
    </source>
</evidence>
<protein>
    <recommendedName>
        <fullName evidence="2">Flap endonuclease 1</fullName>
        <shortName evidence="2">FEN-1</shortName>
        <ecNumber evidence="2">3.1.-.-</ecNumber>
    </recommendedName>
    <alternativeName>
        <fullName evidence="2">Flap structure-specific endonuclease 1</fullName>
    </alternativeName>
</protein>